<protein>
    <recommendedName>
        <fullName evidence="1">Peptide chain release factor 3</fullName>
        <shortName evidence="1">RF-3</shortName>
    </recommendedName>
</protein>
<feature type="chain" id="PRO_0000242228" description="Peptide chain release factor 3">
    <location>
        <begin position="1"/>
        <end position="534"/>
    </location>
</feature>
<feature type="domain" description="tr-type G">
    <location>
        <begin position="9"/>
        <end position="278"/>
    </location>
</feature>
<feature type="binding site" evidence="1">
    <location>
        <begin position="18"/>
        <end position="25"/>
    </location>
    <ligand>
        <name>GTP</name>
        <dbReference type="ChEBI" id="CHEBI:37565"/>
    </ligand>
</feature>
<feature type="binding site" evidence="1">
    <location>
        <begin position="86"/>
        <end position="90"/>
    </location>
    <ligand>
        <name>GTP</name>
        <dbReference type="ChEBI" id="CHEBI:37565"/>
    </ligand>
</feature>
<feature type="binding site" evidence="1">
    <location>
        <begin position="140"/>
        <end position="143"/>
    </location>
    <ligand>
        <name>GTP</name>
        <dbReference type="ChEBI" id="CHEBI:37565"/>
    </ligand>
</feature>
<dbReference type="EMBL" id="AE013598">
    <property type="protein sequence ID" value="AAW75069.1"/>
    <property type="molecule type" value="Genomic_DNA"/>
</dbReference>
<dbReference type="SMR" id="Q5H1V2"/>
<dbReference type="STRING" id="291331.XOO1815"/>
<dbReference type="KEGG" id="xoo:XOO1815"/>
<dbReference type="PATRIC" id="fig|291331.8.peg.2014"/>
<dbReference type="HOGENOM" id="CLU_002794_2_1_6"/>
<dbReference type="Proteomes" id="UP000006735">
    <property type="component" value="Chromosome"/>
</dbReference>
<dbReference type="GO" id="GO:0005829">
    <property type="term" value="C:cytosol"/>
    <property type="evidence" value="ECO:0007669"/>
    <property type="project" value="TreeGrafter"/>
</dbReference>
<dbReference type="GO" id="GO:0005525">
    <property type="term" value="F:GTP binding"/>
    <property type="evidence" value="ECO:0007669"/>
    <property type="project" value="UniProtKB-UniRule"/>
</dbReference>
<dbReference type="GO" id="GO:0003924">
    <property type="term" value="F:GTPase activity"/>
    <property type="evidence" value="ECO:0007669"/>
    <property type="project" value="InterPro"/>
</dbReference>
<dbReference type="GO" id="GO:0097216">
    <property type="term" value="F:guanosine tetraphosphate binding"/>
    <property type="evidence" value="ECO:0007669"/>
    <property type="project" value="UniProtKB-ARBA"/>
</dbReference>
<dbReference type="GO" id="GO:0016150">
    <property type="term" value="F:translation release factor activity, codon nonspecific"/>
    <property type="evidence" value="ECO:0007669"/>
    <property type="project" value="TreeGrafter"/>
</dbReference>
<dbReference type="GO" id="GO:0016149">
    <property type="term" value="F:translation release factor activity, codon specific"/>
    <property type="evidence" value="ECO:0007669"/>
    <property type="project" value="UniProtKB-UniRule"/>
</dbReference>
<dbReference type="GO" id="GO:0006449">
    <property type="term" value="P:regulation of translational termination"/>
    <property type="evidence" value="ECO:0007669"/>
    <property type="project" value="UniProtKB-UniRule"/>
</dbReference>
<dbReference type="CDD" id="cd04169">
    <property type="entry name" value="RF3"/>
    <property type="match status" value="1"/>
</dbReference>
<dbReference type="CDD" id="cd03689">
    <property type="entry name" value="RF3_II"/>
    <property type="match status" value="1"/>
</dbReference>
<dbReference type="CDD" id="cd16259">
    <property type="entry name" value="RF3_III"/>
    <property type="match status" value="1"/>
</dbReference>
<dbReference type="FunFam" id="2.40.30.10:FF:000040">
    <property type="entry name" value="Peptide chain release factor 3"/>
    <property type="match status" value="1"/>
</dbReference>
<dbReference type="FunFam" id="3.30.70.3280:FF:000001">
    <property type="entry name" value="Peptide chain release factor 3"/>
    <property type="match status" value="1"/>
</dbReference>
<dbReference type="FunFam" id="3.40.50.300:FF:000542">
    <property type="entry name" value="Peptide chain release factor 3"/>
    <property type="match status" value="1"/>
</dbReference>
<dbReference type="Gene3D" id="3.40.50.300">
    <property type="entry name" value="P-loop containing nucleotide triphosphate hydrolases"/>
    <property type="match status" value="2"/>
</dbReference>
<dbReference type="Gene3D" id="3.30.70.3280">
    <property type="entry name" value="Peptide chain release factor 3, domain III"/>
    <property type="match status" value="1"/>
</dbReference>
<dbReference type="HAMAP" id="MF_00072">
    <property type="entry name" value="Rel_fac_3"/>
    <property type="match status" value="1"/>
</dbReference>
<dbReference type="InterPro" id="IPR053905">
    <property type="entry name" value="EF-G-like_DII"/>
</dbReference>
<dbReference type="InterPro" id="IPR035647">
    <property type="entry name" value="EFG_III/V"/>
</dbReference>
<dbReference type="InterPro" id="IPR031157">
    <property type="entry name" value="G_TR_CS"/>
</dbReference>
<dbReference type="InterPro" id="IPR027417">
    <property type="entry name" value="P-loop_NTPase"/>
</dbReference>
<dbReference type="InterPro" id="IPR004548">
    <property type="entry name" value="PrfC"/>
</dbReference>
<dbReference type="InterPro" id="IPR032090">
    <property type="entry name" value="RF3_C"/>
</dbReference>
<dbReference type="InterPro" id="IPR038467">
    <property type="entry name" value="RF3_dom_3_sf"/>
</dbReference>
<dbReference type="InterPro" id="IPR041732">
    <property type="entry name" value="RF3_GTP-bd"/>
</dbReference>
<dbReference type="InterPro" id="IPR005225">
    <property type="entry name" value="Small_GTP-bd"/>
</dbReference>
<dbReference type="InterPro" id="IPR000795">
    <property type="entry name" value="T_Tr_GTP-bd_dom"/>
</dbReference>
<dbReference type="InterPro" id="IPR009000">
    <property type="entry name" value="Transl_B-barrel_sf"/>
</dbReference>
<dbReference type="NCBIfam" id="TIGR00503">
    <property type="entry name" value="prfC"/>
    <property type="match status" value="1"/>
</dbReference>
<dbReference type="NCBIfam" id="NF001964">
    <property type="entry name" value="PRK00741.1"/>
    <property type="match status" value="1"/>
</dbReference>
<dbReference type="NCBIfam" id="TIGR00231">
    <property type="entry name" value="small_GTP"/>
    <property type="match status" value="1"/>
</dbReference>
<dbReference type="PANTHER" id="PTHR43556">
    <property type="entry name" value="PEPTIDE CHAIN RELEASE FACTOR RF3"/>
    <property type="match status" value="1"/>
</dbReference>
<dbReference type="PANTHER" id="PTHR43556:SF2">
    <property type="entry name" value="PEPTIDE CHAIN RELEASE FACTOR RF3"/>
    <property type="match status" value="1"/>
</dbReference>
<dbReference type="Pfam" id="PF22042">
    <property type="entry name" value="EF-G_D2"/>
    <property type="match status" value="1"/>
</dbReference>
<dbReference type="Pfam" id="PF00009">
    <property type="entry name" value="GTP_EFTU"/>
    <property type="match status" value="1"/>
</dbReference>
<dbReference type="Pfam" id="PF16658">
    <property type="entry name" value="RF3_C"/>
    <property type="match status" value="1"/>
</dbReference>
<dbReference type="PRINTS" id="PR00315">
    <property type="entry name" value="ELONGATNFCT"/>
</dbReference>
<dbReference type="SUPFAM" id="SSF54980">
    <property type="entry name" value="EF-G C-terminal domain-like"/>
    <property type="match status" value="1"/>
</dbReference>
<dbReference type="SUPFAM" id="SSF52540">
    <property type="entry name" value="P-loop containing nucleoside triphosphate hydrolases"/>
    <property type="match status" value="1"/>
</dbReference>
<dbReference type="SUPFAM" id="SSF50447">
    <property type="entry name" value="Translation proteins"/>
    <property type="match status" value="1"/>
</dbReference>
<dbReference type="PROSITE" id="PS00301">
    <property type="entry name" value="G_TR_1"/>
    <property type="match status" value="1"/>
</dbReference>
<dbReference type="PROSITE" id="PS51722">
    <property type="entry name" value="G_TR_2"/>
    <property type="match status" value="1"/>
</dbReference>
<sequence>MSDVSNEAARRRTFAIISHPDAGKTTLTEKLLLFGGAIQMAGSVKGRKAARHATSDWMALEKERGISVTSSVMQFPYEGKIVNLLDTPGHADFGEDTYRVLTAVDSALMVIDVAKGVEERTIKLMEVCRLRDTPIMTFINKLDREGKNPIDLLDEVETVLGIQCAPVTWPIGMGQRLKGVVHLISGEVHLYEQGRNFTRQDSTIFPSLDAPGLAEKIGEQMLTELRDELELVQGASNPFDLDAYRAGQQTPVFFGSGVNNFGVQPLLDFFIEHAPPPQTRETTGRRVAPSETKLSGFVFKIQANMDPQHRDRVAFMRVCSGKFTAGMKTLHVRSGKDVKLANALTFMASDREIAAEAWPGDVIGIHNHGTISIGDTFTEGESLSFTGIPNFAPELFRRARLRDPLKLKQLQKGLAQLSEEGATQFFRPLMSNDLILGAVGVLQFDVVAYRLKDEYGVDAIFEPVSVTTARWVHCDNVKKLDEFREKNAGNLGIDAAGQLVYLAPTRVNLQLAQERAPDVRFSATREHVHAKAID</sequence>
<reference key="1">
    <citation type="journal article" date="2005" name="Nucleic Acids Res.">
        <title>The genome sequence of Xanthomonas oryzae pathovar oryzae KACC10331, the bacterial blight pathogen of rice.</title>
        <authorList>
            <person name="Lee B.-M."/>
            <person name="Park Y.-J."/>
            <person name="Park D.-S."/>
            <person name="Kang H.-W."/>
            <person name="Kim J.-G."/>
            <person name="Song E.-S."/>
            <person name="Park I.-C."/>
            <person name="Yoon U.-H."/>
            <person name="Hahn J.-H."/>
            <person name="Koo B.-S."/>
            <person name="Lee G.-B."/>
            <person name="Kim H."/>
            <person name="Park H.-S."/>
            <person name="Yoon K.-O."/>
            <person name="Kim J.-H."/>
            <person name="Jung C.-H."/>
            <person name="Koh N.-H."/>
            <person name="Seo J.-S."/>
            <person name="Go S.-J."/>
        </authorList>
    </citation>
    <scope>NUCLEOTIDE SEQUENCE [LARGE SCALE GENOMIC DNA]</scope>
    <source>
        <strain>KACC10331 / KXO85</strain>
    </source>
</reference>
<keyword id="KW-0963">Cytoplasm</keyword>
<keyword id="KW-0342">GTP-binding</keyword>
<keyword id="KW-0547">Nucleotide-binding</keyword>
<keyword id="KW-0648">Protein biosynthesis</keyword>
<keyword id="KW-1185">Reference proteome</keyword>
<evidence type="ECO:0000255" key="1">
    <source>
        <dbReference type="HAMAP-Rule" id="MF_00072"/>
    </source>
</evidence>
<accession>Q5H1V2</accession>
<gene>
    <name evidence="1" type="primary">prfC</name>
    <name type="ordered locus">XOO1815</name>
</gene>
<comment type="function">
    <text evidence="1">Increases the formation of ribosomal termination complexes and stimulates activities of RF-1 and RF-2. It binds guanine nucleotides and has strong preference for UGA stop codons. It may interact directly with the ribosome. The stimulation of RF-1 and RF-2 is significantly reduced by GTP and GDP, but not by GMP.</text>
</comment>
<comment type="subcellular location">
    <subcellularLocation>
        <location evidence="1">Cytoplasm</location>
    </subcellularLocation>
</comment>
<comment type="similarity">
    <text evidence="1">Belongs to the TRAFAC class translation factor GTPase superfamily. Classic translation factor GTPase family. PrfC subfamily.</text>
</comment>
<name>RF3_XANOR</name>
<organism>
    <name type="scientific">Xanthomonas oryzae pv. oryzae (strain KACC10331 / KXO85)</name>
    <dbReference type="NCBI Taxonomy" id="291331"/>
    <lineage>
        <taxon>Bacteria</taxon>
        <taxon>Pseudomonadati</taxon>
        <taxon>Pseudomonadota</taxon>
        <taxon>Gammaproteobacteria</taxon>
        <taxon>Lysobacterales</taxon>
        <taxon>Lysobacteraceae</taxon>
        <taxon>Xanthomonas</taxon>
    </lineage>
</organism>
<proteinExistence type="inferred from homology"/>